<sequence length="442" mass="50399">MKEDEPAGPKVEDLIAQAKMVLDFNWTGEYTRPGPRLYPHQWSWDSALIALGYARYAPDRAMRELSHLFDAQWKNGLLPQIVFNPDFAAYFPDASFWHADESPDAPTHLRTSGIVQPPVHATAVLALLRNAAEAPGVRSFCEKAFSRLVSWHDYLYRERDPGGENLVYIRHPWESGMDNSPMWDAILESMFLYPSDIPSYKRADTHFVSSEDRPESAAYDRFAYLVKLFAERNYDEARIREDCPFLVQDVLFNSLLCRAERDLAELARTLGEEPSAFEARARKTAEAINDKLWDGERGTYLGFDLVSGAHIKVLAAPNFVALYGEVPDRKRARAMLARLSSPSFSLTEGTGVPVTSYDRLGFGFSSVRYWRGPVWVNIDWFLMHGLRRYGYEDEADRLREAIVRLCREEGFYEYFDPTTGMGHGSDLFSWTAALLLDVVLEG</sequence>
<proteinExistence type="evidence at protein level"/>
<dbReference type="EC" id="3.2.1.170" evidence="2"/>
<dbReference type="EMBL" id="JN704789">
    <property type="protein sequence ID" value="AFC76324.1"/>
    <property type="molecule type" value="Genomic_DNA"/>
</dbReference>
<dbReference type="EMBL" id="CP007515">
    <property type="protein sequence ID" value="AHY48175.1"/>
    <property type="molecule type" value="Genomic_DNA"/>
</dbReference>
<dbReference type="RefSeq" id="WP_041338668.1">
    <property type="nucleotide sequence ID" value="NZ_JAWXXX010000002.1"/>
</dbReference>
<dbReference type="SMR" id="J9PY59"/>
<dbReference type="KEGG" id="rrd:RradSPS_2892"/>
<dbReference type="PATRIC" id="fig|42256.3.peg.2942"/>
<dbReference type="eggNOG" id="COG1626">
    <property type="taxonomic scope" value="Bacteria"/>
</dbReference>
<dbReference type="HOGENOM" id="CLU_015270_1_0_11"/>
<dbReference type="OrthoDB" id="9781878at2"/>
<dbReference type="Proteomes" id="UP000025229">
    <property type="component" value="Plasmid 1"/>
</dbReference>
<dbReference type="GO" id="GO:0004573">
    <property type="term" value="F:Glc3Man9GlcNAc2 oligosaccharide glucosidase activity"/>
    <property type="evidence" value="ECO:0007669"/>
    <property type="project" value="InterPro"/>
</dbReference>
<dbReference type="GO" id="GO:0009311">
    <property type="term" value="P:oligosaccharide metabolic process"/>
    <property type="evidence" value="ECO:0007669"/>
    <property type="project" value="InterPro"/>
</dbReference>
<dbReference type="GO" id="GO:0006487">
    <property type="term" value="P:protein N-linked glycosylation"/>
    <property type="evidence" value="ECO:0007669"/>
    <property type="project" value="TreeGrafter"/>
</dbReference>
<dbReference type="Gene3D" id="1.50.10.10">
    <property type="match status" value="1"/>
</dbReference>
<dbReference type="InterPro" id="IPR008928">
    <property type="entry name" value="6-hairpin_glycosidase_sf"/>
</dbReference>
<dbReference type="InterPro" id="IPR012341">
    <property type="entry name" value="6hp_glycosidase-like_sf"/>
</dbReference>
<dbReference type="InterPro" id="IPR004888">
    <property type="entry name" value="Glycoside_hydrolase_63"/>
</dbReference>
<dbReference type="InterPro" id="IPR054491">
    <property type="entry name" value="MGH1-like_GH"/>
</dbReference>
<dbReference type="PANTHER" id="PTHR10412">
    <property type="entry name" value="MANNOSYL-OLIGOSACCHARIDE GLUCOSIDASE"/>
    <property type="match status" value="1"/>
</dbReference>
<dbReference type="PANTHER" id="PTHR10412:SF11">
    <property type="entry name" value="MANNOSYL-OLIGOSACCHARIDE GLUCOSIDASE"/>
    <property type="match status" value="1"/>
</dbReference>
<dbReference type="Pfam" id="PF22422">
    <property type="entry name" value="MGH1-like_GH"/>
    <property type="match status" value="1"/>
</dbReference>
<dbReference type="SUPFAM" id="SSF48208">
    <property type="entry name" value="Six-hairpin glycosidases"/>
    <property type="match status" value="1"/>
</dbReference>
<feature type="chain" id="PRO_0000461444" description="Mannosylglycerate hydrolase">
    <location>
        <begin position="1"/>
        <end position="442"/>
    </location>
</feature>
<feature type="active site" description="Proton donor" evidence="1">
    <location>
        <position position="178"/>
    </location>
</feature>
<feature type="active site" description="Proton acceptor" evidence="1">
    <location>
        <position position="413"/>
    </location>
</feature>
<feature type="binding site" evidence="1">
    <location>
        <position position="38"/>
    </location>
    <ligand>
        <name>substrate</name>
    </ligand>
</feature>
<feature type="binding site" evidence="1">
    <location>
        <begin position="42"/>
        <end position="45"/>
    </location>
    <ligand>
        <name>substrate</name>
    </ligand>
</feature>
<feature type="binding site" evidence="1">
    <location>
        <position position="90"/>
    </location>
    <ligand>
        <name>substrate</name>
    </ligand>
</feature>
<feature type="binding site" evidence="1">
    <location>
        <position position="116"/>
    </location>
    <ligand>
        <name>substrate</name>
    </ligand>
</feature>
<feature type="binding site" evidence="1">
    <location>
        <position position="176"/>
    </location>
    <ligand>
        <name>substrate</name>
    </ligand>
</feature>
<feature type="binding site" evidence="1">
    <location>
        <position position="213"/>
    </location>
    <ligand>
        <name>substrate</name>
    </ligand>
</feature>
<feature type="binding site" evidence="1">
    <location>
        <begin position="369"/>
        <end position="370"/>
    </location>
    <ligand>
        <name>substrate</name>
    </ligand>
</feature>
<name>MGH_RUBRA</name>
<organism>
    <name type="scientific">Rubrobacter radiotolerans</name>
    <name type="common">Arthrobacter radiotolerans</name>
    <dbReference type="NCBI Taxonomy" id="42256"/>
    <lineage>
        <taxon>Bacteria</taxon>
        <taxon>Bacillati</taxon>
        <taxon>Actinomycetota</taxon>
        <taxon>Rubrobacteria</taxon>
        <taxon>Rubrobacterales</taxon>
        <taxon>Rubrobacteraceae</taxon>
        <taxon>Rubrobacter</taxon>
    </lineage>
</organism>
<accession>J9PY59</accession>
<keyword id="KW-0326">Glycosidase</keyword>
<keyword id="KW-0378">Hydrolase</keyword>
<keyword id="KW-0614">Plasmid</keyword>
<keyword id="KW-1185">Reference proteome</keyword>
<geneLocation type="plasmid" evidence="7">
    <name>1</name>
</geneLocation>
<reference evidence="6" key="1">
    <citation type="journal article" date="2013" name="Enzyme Microb. Technol.">
        <title>A new bacterial hydrolase specific for the compatible solutes alpha-D-mannopyranosyl-(1-&gt;2)-D-glycerate and alpha-D-glucopyranosyl-(1-&gt;2)-D-glycerate.</title>
        <authorList>
            <person name="Alarico S."/>
            <person name="Empadinhas N."/>
            <person name="da Costa M.S."/>
        </authorList>
    </citation>
    <scope>NUCLEOTIDE SEQUENCE [GENOMIC DNA]</scope>
    <scope>FUNCTION</scope>
    <scope>CATALYTIC ACTIVITY</scope>
    <scope>ACTIVITY REGULATION</scope>
    <scope>BIOPHYSICOCHEMICAL PROPERTIES</scope>
    <scope>SUBUNIT</scope>
    <source>
        <strain>RSPS-4</strain>
    </source>
</reference>
<reference evidence="7" key="2">
    <citation type="journal article" date="2014" name="Stand. Genomic Sci.">
        <title>Complete genome sequence of the Radiation-Resistant bacterium Rubrobacter radiotolerans RSPS-4.</title>
        <authorList>
            <person name="Egas C."/>
            <person name="Barroso C."/>
            <person name="Froufe H.J."/>
            <person name="Pacheco J."/>
            <person name="Albuquerque L."/>
            <person name="da Costa M.S."/>
        </authorList>
    </citation>
    <scope>NUCLEOTIDE SEQUENCE [LARGE SCALE GENOMIC DNA]</scope>
    <source>
        <strain>RSPS-4</strain>
        <plasmid>1</plasmid>
    </source>
</reference>
<gene>
    <name evidence="3" type="primary">mgh</name>
    <name evidence="7" type="ORF">RradSPS_2892</name>
</gene>
<protein>
    <recommendedName>
        <fullName evidence="3">Mannosylglycerate hydrolase</fullName>
        <shortName evidence="3">MG hydrolase</shortName>
        <shortName evidence="3">MgH</shortName>
        <ecNumber evidence="2">3.2.1.170</ecNumber>
    </recommendedName>
</protein>
<evidence type="ECO:0000250" key="1">
    <source>
        <dbReference type="UniProtKB" id="K5BDL0"/>
    </source>
</evidence>
<evidence type="ECO:0000269" key="2">
    <source>
    </source>
</evidence>
<evidence type="ECO:0000303" key="3">
    <source>
    </source>
</evidence>
<evidence type="ECO:0000305" key="4"/>
<evidence type="ECO:0000305" key="5">
    <source>
    </source>
</evidence>
<evidence type="ECO:0000312" key="6">
    <source>
        <dbReference type="EMBL" id="AFC76324.1"/>
    </source>
</evidence>
<evidence type="ECO:0000312" key="7">
    <source>
        <dbReference type="EMBL" id="AHY48175.1"/>
    </source>
</evidence>
<comment type="function">
    <text evidence="2">Hydrolase that catalyzes the hydrolysis of mannosylglycerate (MG), a solute produced in response to osmotic stress in thermophiles, into mannose and glycerate (PubMed:23273275). Can also hydrolyze glucosylglycerate (GG) to glucose and glycerate, with similar catalytic efficiency (PubMed:23273275). Is highly specific for MG and GG, and cannot use mannosylglyceramide (MGA), glucosylglycerol, mannosylglucosylglycerate (MGG), glucosylglucosylglycerate (GGG) or trehalose as substrates (PubMed:23273275).</text>
</comment>
<comment type="catalytic activity">
    <reaction evidence="2">
        <text>(2R)-2-O-(alpha-D-mannosyl)-glycerate + H2O = D-mannose + (R)-glycerate</text>
        <dbReference type="Rhea" id="RHEA:58456"/>
        <dbReference type="ChEBI" id="CHEBI:4208"/>
        <dbReference type="ChEBI" id="CHEBI:15377"/>
        <dbReference type="ChEBI" id="CHEBI:16659"/>
        <dbReference type="ChEBI" id="CHEBI:57541"/>
        <dbReference type="EC" id="3.2.1.170"/>
    </reaction>
    <physiologicalReaction direction="left-to-right" evidence="5">
        <dbReference type="Rhea" id="RHEA:58457"/>
    </physiologicalReaction>
</comment>
<comment type="catalytic activity">
    <reaction evidence="2">
        <text>(2R)-2-O-(alpha-D-glucopyranosyl)-glycerate + H2O = (R)-glycerate + D-glucose</text>
        <dbReference type="Rhea" id="RHEA:32059"/>
        <dbReference type="ChEBI" id="CHEBI:4167"/>
        <dbReference type="ChEBI" id="CHEBI:15377"/>
        <dbReference type="ChEBI" id="CHEBI:16659"/>
        <dbReference type="ChEBI" id="CHEBI:62510"/>
    </reaction>
</comment>
<comment type="activity regulation">
    <text evidence="2">Activity is not stimulated by divalent cations and not affected in the presence of EDTA.</text>
</comment>
<comment type="biophysicochemical properties">
    <kinetics>
        <KM evidence="2">6.37 mM for mannosylglycerate (at 50 degrees Celsius)</KM>
        <KM evidence="2">4.18 mM for glucosylglycerate (at 50 degrees Celsius)</KM>
        <Vmax evidence="2">65.2 umol/min/mg enzyme with mannosylglycerate as substrate (at 50 degrees Celsius)</Vmax>
        <Vmax evidence="2">53.62 umol/min/mg enzyme with glucosylglycerate as substrate (at 50 degrees Celsius)</Vmax>
    </kinetics>
    <temperatureDependence>
        <text evidence="2">Optimum temperature is 55 degrees Celsius (PubMed:23273275). Retains about 28% and 14% of maximal activity at 30 and 80 degrees Celsius, respectively (PubMed:23273275).</text>
    </temperatureDependence>
</comment>
<comment type="subunit">
    <text evidence="2">Homodimer in solution.</text>
</comment>
<comment type="similarity">
    <text evidence="4">Belongs to the glycosyl hydrolase 63 family.</text>
</comment>